<name>KR133_HUMAN</name>
<sequence>MSYNCCSRNFSSCSHGGYLHYPGSSCGSSYPSNLVYSTDLCSPSTCQLGSSLYRGCQETCWRPNSCQTLCVESSPCHTSCYYPRTHMLCNSCLTMHVGSRGFGSNSCCSLSCGSRSCSSLGCGSNGFRYLNYRIHTSPSQSYRSRFCHPIYFPPRRWFHSSCYQPFCRSGFY</sequence>
<organism>
    <name type="scientific">Homo sapiens</name>
    <name type="common">Human</name>
    <dbReference type="NCBI Taxonomy" id="9606"/>
    <lineage>
        <taxon>Eukaryota</taxon>
        <taxon>Metazoa</taxon>
        <taxon>Chordata</taxon>
        <taxon>Craniata</taxon>
        <taxon>Vertebrata</taxon>
        <taxon>Euteleostomi</taxon>
        <taxon>Mammalia</taxon>
        <taxon>Eutheria</taxon>
        <taxon>Euarchontoglires</taxon>
        <taxon>Primates</taxon>
        <taxon>Haplorrhini</taxon>
        <taxon>Catarrhini</taxon>
        <taxon>Hominidae</taxon>
        <taxon>Homo</taxon>
    </lineage>
</organism>
<reference key="1">
    <citation type="submission" date="2002-11" db="EMBL/GenBank/DDBJ databases">
        <title>Identification of eight novel genes from keratin associated protein gene cluster on human chromosome 21q22.11.</title>
        <authorList>
            <person name="Obayashi I."/>
            <person name="Shibuya K."/>
            <person name="Kudoh J."/>
            <person name="Shimizu N."/>
        </authorList>
    </citation>
    <scope>NUCLEOTIDE SEQUENCE [MRNA]</scope>
    <source>
        <tissue>Small intestine</tissue>
    </source>
</reference>
<reference key="2">
    <citation type="journal article" date="2004" name="Genome Res.">
        <title>The status, quality, and expansion of the NIH full-length cDNA project: the Mammalian Gene Collection (MGC).</title>
        <authorList>
            <consortium name="The MGC Project Team"/>
        </authorList>
    </citation>
    <scope>NUCLEOTIDE SEQUENCE [LARGE SCALE MRNA]</scope>
</reference>
<comment type="function">
    <text evidence="1">In the hair cortex, hair keratin intermediate filaments are embedded in an interfilamentous matrix, consisting of hair keratin-associated proteins (KRTAP), which are essential for the formation of a rigid and resistant hair shaft through their extensive disulfide bond cross-linking with abundant cysteine residues of hair keratins. The matrix proteins include the high-sulfur and high-glycine-tyrosine keratins (By similarity).</text>
</comment>
<comment type="subunit">
    <text evidence="1">Interacts with hair keratins.</text>
</comment>
<comment type="interaction">
    <interactant intactId="EBI-10241252">
        <id>Q3SY46</id>
    </interactant>
    <interactant intactId="EBI-8643161">
        <id>Q9NX04</id>
        <label>AIRIM</label>
    </interactant>
    <organismsDiffer>false</organismsDiffer>
    <experiments>3</experiments>
</comment>
<comment type="interaction">
    <interactant intactId="EBI-10241252">
        <id>Q3SY46</id>
    </interactant>
    <interactant intactId="EBI-12006308">
        <id>Q7Z3C6-3</id>
        <label>ATG9A</label>
    </interactant>
    <organismsDiffer>false</organismsDiffer>
    <experiments>5</experiments>
</comment>
<comment type="interaction">
    <interactant intactId="EBI-10241252">
        <id>Q3SY46</id>
    </interactant>
    <interactant intactId="EBI-930964">
        <id>P54253</id>
        <label>ATXN1</label>
    </interactant>
    <organismsDiffer>false</organismsDiffer>
    <experiments>3</experiments>
</comment>
<comment type="interaction">
    <interactant intactId="EBI-10241252">
        <id>Q3SY46</id>
    </interactant>
    <interactant intactId="EBI-725606">
        <id>Q9NWQ9</id>
        <label>C14orf119</label>
    </interactant>
    <organismsDiffer>false</organismsDiffer>
    <experiments>3</experiments>
</comment>
<comment type="interaction">
    <interactant intactId="EBI-10241252">
        <id>Q3SY46</id>
    </interactant>
    <interactant intactId="EBI-10171570">
        <id>Q68D86</id>
        <label>CCDC102B</label>
    </interactant>
    <organismsDiffer>false</organismsDiffer>
    <experiments>3</experiments>
</comment>
<comment type="interaction">
    <interactant intactId="EBI-10241252">
        <id>Q3SY46</id>
    </interactant>
    <interactant intactId="EBI-744556">
        <id>Q96HB5</id>
        <label>CCDC120</label>
    </interactant>
    <organismsDiffer>false</organismsDiffer>
    <experiments>3</experiments>
</comment>
<comment type="interaction">
    <interactant intactId="EBI-10241252">
        <id>Q3SY46</id>
    </interactant>
    <interactant intactId="EBI-10961624">
        <id>Q2TAC2-2</id>
        <label>CCDC57</label>
    </interactant>
    <organismsDiffer>false</organismsDiffer>
    <experiments>3</experiments>
</comment>
<comment type="interaction">
    <interactant intactId="EBI-10241252">
        <id>Q3SY46</id>
    </interactant>
    <interactant intactId="EBI-10192241">
        <id>O95833</id>
        <label>CLIC3</label>
    </interactant>
    <organismsDiffer>false</organismsDiffer>
    <experiments>5</experiments>
</comment>
<comment type="interaction">
    <interactant intactId="EBI-10241252">
        <id>Q3SY46</id>
    </interactant>
    <interactant intactId="EBI-747133">
        <id>P27658</id>
        <label>COL8A1</label>
    </interactant>
    <organismsDiffer>false</organismsDiffer>
    <experiments>3</experiments>
</comment>
<comment type="interaction">
    <interactant intactId="EBI-10241252">
        <id>Q3SY46</id>
    </interactant>
    <interactant intactId="EBI-7043337">
        <id>P05813</id>
        <label>CRYBA1</label>
    </interactant>
    <organismsDiffer>false</organismsDiffer>
    <experiments>3</experiments>
</comment>
<comment type="interaction">
    <interactant intactId="EBI-10241252">
        <id>Q3SY46</id>
    </interactant>
    <interactant intactId="EBI-750444">
        <id>P53672</id>
        <label>CRYBA2</label>
    </interactant>
    <organismsDiffer>false</organismsDiffer>
    <experiments>3</experiments>
</comment>
<comment type="interaction">
    <interactant intactId="EBI-10241252">
        <id>Q3SY46</id>
    </interactant>
    <interactant intactId="EBI-3867333">
        <id>A8MQ03</id>
        <label>CYSRT1</label>
    </interactant>
    <organismsDiffer>false</organismsDiffer>
    <experiments>3</experiments>
</comment>
<comment type="interaction">
    <interactant intactId="EBI-10241252">
        <id>Q3SY46</id>
    </interactant>
    <interactant intactId="EBI-10968534">
        <id>P50570-2</id>
        <label>DNM2</label>
    </interactant>
    <organismsDiffer>false</organismsDiffer>
    <experiments>3</experiments>
</comment>
<comment type="interaction">
    <interactant intactId="EBI-10241252">
        <id>Q3SY46</id>
    </interactant>
    <interactant intactId="EBI-740376">
        <id>Q86UW9</id>
        <label>DTX2</label>
    </interactant>
    <organismsDiffer>false</organismsDiffer>
    <experiments>3</experiments>
</comment>
<comment type="interaction">
    <interactant intactId="EBI-10241252">
        <id>Q3SY46</id>
    </interactant>
    <interactant intactId="EBI-743414">
        <id>O95967</id>
        <label>EFEMP2</label>
    </interactant>
    <organismsDiffer>false</organismsDiffer>
    <experiments>5</experiments>
</comment>
<comment type="interaction">
    <interactant intactId="EBI-10241252">
        <id>Q3SY46</id>
    </interactant>
    <interactant intactId="EBI-4397076">
        <id>P16930</id>
        <label>FAH</label>
    </interactant>
    <organismsDiffer>false</organismsDiffer>
    <experiments>3</experiments>
</comment>
<comment type="interaction">
    <interactant intactId="EBI-10241252">
        <id>Q3SY46</id>
    </interactant>
    <interactant intactId="EBI-1759806">
        <id>O75593</id>
        <label>FOXH1</label>
    </interactant>
    <organismsDiffer>false</organismsDiffer>
    <experiments>3</experiments>
</comment>
<comment type="interaction">
    <interactant intactId="EBI-10241252">
        <id>Q3SY46</id>
    </interactant>
    <interactant intactId="EBI-2806671">
        <id>P23769</id>
        <label>GATA2</label>
    </interactant>
    <organismsDiffer>false</organismsDiffer>
    <experiments>3</experiments>
</comment>
<comment type="interaction">
    <interactant intactId="EBI-10241252">
        <id>Q3SY46</id>
    </interactant>
    <interactant intactId="EBI-11975289">
        <id>Q9Y223-2</id>
        <label>GNE</label>
    </interactant>
    <organismsDiffer>false</organismsDiffer>
    <experiments>3</experiments>
</comment>
<comment type="interaction">
    <interactant intactId="EBI-10241252">
        <id>Q3SY46</id>
    </interactant>
    <interactant intactId="EBI-751540">
        <id>O95872</id>
        <label>GPANK1</label>
    </interactant>
    <organismsDiffer>false</organismsDiffer>
    <experiments>3</experiments>
</comment>
<comment type="interaction">
    <interactant intactId="EBI-10241252">
        <id>Q3SY46</id>
    </interactant>
    <interactant intactId="EBI-347538">
        <id>Q9Y4H4</id>
        <label>GPSM3</label>
    </interactant>
    <organismsDiffer>false</organismsDiffer>
    <experiments>3</experiments>
</comment>
<comment type="interaction">
    <interactant intactId="EBI-10241252">
        <id>Q3SY46</id>
    </interactant>
    <interactant intactId="EBI-747754">
        <id>P28799</id>
        <label>GRN</label>
    </interactant>
    <organismsDiffer>false</organismsDiffer>
    <experiments>3</experiments>
</comment>
<comment type="interaction">
    <interactant intactId="EBI-10241252">
        <id>Q3SY46</id>
    </interactant>
    <interactant intactId="EBI-11978177">
        <id>Q96NT3-2</id>
        <label>GUCD1</label>
    </interactant>
    <organismsDiffer>false</organismsDiffer>
    <experiments>5</experiments>
</comment>
<comment type="interaction">
    <interactant intactId="EBI-10241252">
        <id>Q3SY46</id>
    </interactant>
    <interactant intactId="EBI-5460660">
        <id>Q96MH2</id>
        <label>HEXIM2</label>
    </interactant>
    <organismsDiffer>false</organismsDiffer>
    <experiments>3</experiments>
</comment>
<comment type="interaction">
    <interactant intactId="EBI-10241252">
        <id>Q3SY46</id>
    </interactant>
    <interactant intactId="EBI-740785">
        <id>P49639</id>
        <label>HOXA1</label>
    </interactant>
    <organismsDiffer>false</organismsDiffer>
    <experiments>3</experiments>
</comment>
<comment type="interaction">
    <interactant intactId="EBI-10241252">
        <id>Q3SY46</id>
    </interactant>
    <interactant intactId="EBI-1752118">
        <id>P31273</id>
        <label>HOXC8</label>
    </interactant>
    <organismsDiffer>false</organismsDiffer>
    <experiments>3</experiments>
</comment>
<comment type="interaction">
    <interactant intactId="EBI-10241252">
        <id>Q3SY46</id>
    </interactant>
    <interactant intactId="EBI-3918847">
        <id>Q9H2F3</id>
        <label>HSD3B7</label>
    </interactant>
    <organismsDiffer>false</organismsDiffer>
    <experiments>3</experiments>
</comment>
<comment type="interaction">
    <interactant intactId="EBI-10241252">
        <id>Q3SY46</id>
    </interactant>
    <interactant intactId="EBI-352682">
        <id>P04792</id>
        <label>HSPB1</label>
    </interactant>
    <organismsDiffer>false</organismsDiffer>
    <experiments>3</experiments>
</comment>
<comment type="interaction">
    <interactant intactId="EBI-10241252">
        <id>Q3SY46</id>
    </interactant>
    <interactant intactId="EBI-11954971">
        <id>Q96MP8-2</id>
        <label>KCTD7</label>
    </interactant>
    <organismsDiffer>false</organismsDiffer>
    <experiments>3</experiments>
</comment>
<comment type="interaction">
    <interactant intactId="EBI-10241252">
        <id>Q3SY46</id>
    </interactant>
    <interactant intactId="EBI-4397613">
        <id>Q7L273</id>
        <label>KCTD9</label>
    </interactant>
    <organismsDiffer>false</organismsDiffer>
    <experiments>3</experiments>
</comment>
<comment type="interaction">
    <interactant intactId="EBI-10241252">
        <id>Q3SY46</id>
    </interactant>
    <interactant intactId="EBI-10975473">
        <id>O60333-2</id>
        <label>KIF1B</label>
    </interactant>
    <organismsDiffer>false</organismsDiffer>
    <experiments>3</experiments>
</comment>
<comment type="interaction">
    <interactant intactId="EBI-10241252">
        <id>Q3SY46</id>
    </interactant>
    <interactant intactId="EBI-10981970">
        <id>Q5T749</id>
        <label>KPRP</label>
    </interactant>
    <organismsDiffer>false</organismsDiffer>
    <experiments>3</experiments>
</comment>
<comment type="interaction">
    <interactant intactId="EBI-10241252">
        <id>Q3SY46</id>
    </interactant>
    <interactant intactId="EBI-10221390">
        <id>P78385</id>
        <label>KRT83</label>
    </interactant>
    <organismsDiffer>false</organismsDiffer>
    <experiments>3</experiments>
</comment>
<comment type="interaction">
    <interactant intactId="EBI-10241252">
        <id>Q3SY46</id>
    </interactant>
    <interactant intactId="EBI-10217483">
        <id>P60412</id>
        <label>KRTAP10-11</label>
    </interactant>
    <organismsDiffer>false</organismsDiffer>
    <experiments>3</experiments>
</comment>
<comment type="interaction">
    <interactant intactId="EBI-10241252">
        <id>Q3SY46</id>
    </interactant>
    <interactant intactId="EBI-11953334">
        <id>P60328</id>
        <label>KRTAP12-3</label>
    </interactant>
    <organismsDiffer>false</organismsDiffer>
    <experiments>3</experiments>
</comment>
<comment type="interaction">
    <interactant intactId="EBI-10241252">
        <id>Q3SY46</id>
    </interactant>
    <interactant intactId="EBI-9996449">
        <id>Q9BYR8</id>
        <label>KRTAP3-1</label>
    </interactant>
    <organismsDiffer>false</organismsDiffer>
    <experiments>3</experiments>
</comment>
<comment type="interaction">
    <interactant intactId="EBI-10241252">
        <id>Q3SY46</id>
    </interactant>
    <interactant intactId="EBI-751260">
        <id>Q9BYR7</id>
        <label>KRTAP3-2</label>
    </interactant>
    <organismsDiffer>false</organismsDiffer>
    <experiments>3</experiments>
</comment>
<comment type="interaction">
    <interactant intactId="EBI-10241252">
        <id>Q3SY46</id>
    </interactant>
    <interactant intactId="EBI-11993296">
        <id>Q6L8G4</id>
        <label>KRTAP5-11</label>
    </interactant>
    <organismsDiffer>false</organismsDiffer>
    <experiments>3</experiments>
</comment>
<comment type="interaction">
    <interactant intactId="EBI-10241252">
        <id>Q3SY46</id>
    </interactant>
    <interactant intactId="EBI-10250562">
        <id>Q6L8G9</id>
        <label>KRTAP5-6</label>
    </interactant>
    <organismsDiffer>false</organismsDiffer>
    <experiments>3</experiments>
</comment>
<comment type="interaction">
    <interactant intactId="EBI-10241252">
        <id>Q3SY46</id>
    </interactant>
    <interactant intactId="EBI-1044640">
        <id>Q9BYQ4</id>
        <label>KRTAP9-2</label>
    </interactant>
    <organismsDiffer>false</organismsDiffer>
    <experiments>3</experiments>
</comment>
<comment type="interaction">
    <interactant intactId="EBI-10241252">
        <id>Q3SY46</id>
    </interactant>
    <interactant intactId="EBI-1043191">
        <id>Q9BYQ3</id>
        <label>KRTAP9-3</label>
    </interactant>
    <organismsDiffer>false</organismsDiffer>
    <experiments>3</experiments>
</comment>
<comment type="interaction">
    <interactant intactId="EBI-10241252">
        <id>Q3SY46</id>
    </interactant>
    <interactant intactId="EBI-739832">
        <id>Q8TBB1</id>
        <label>LNX1</label>
    </interactant>
    <organismsDiffer>false</organismsDiffer>
    <experiments>3</experiments>
</comment>
<comment type="interaction">
    <interactant intactId="EBI-10241252">
        <id>Q3SY46</id>
    </interactant>
    <interactant intactId="EBI-2341787">
        <id>Q17RB8</id>
        <label>LONRF1</label>
    </interactant>
    <organismsDiffer>false</organismsDiffer>
    <experiments>3</experiments>
</comment>
<comment type="interaction">
    <interactant intactId="EBI-10241252">
        <id>Q3SY46</id>
    </interactant>
    <interactant intactId="EBI-8852072">
        <id>Q9UH92-3</id>
        <label>MLX</label>
    </interactant>
    <organismsDiffer>false</organismsDiffer>
    <experiments>3</experiments>
</comment>
<comment type="interaction">
    <interactant intactId="EBI-10241252">
        <id>Q3SY46</id>
    </interactant>
    <interactant intactId="EBI-11750983">
        <id>Q9HC98-4</id>
        <label>NEK6</label>
    </interactant>
    <organismsDiffer>false</organismsDiffer>
    <experiments>3</experiments>
</comment>
<comment type="interaction">
    <interactant intactId="EBI-10241252">
        <id>Q3SY46</id>
    </interactant>
    <interactant intactId="EBI-945833">
        <id>Q7Z3S9</id>
        <label>NOTCH2NLA</label>
    </interactant>
    <organismsDiffer>false</organismsDiffer>
    <experiments>3</experiments>
</comment>
<comment type="interaction">
    <interactant intactId="EBI-10241252">
        <id>Q3SY46</id>
    </interactant>
    <interactant intactId="EBI-22310682">
        <id>P0DPK4</id>
        <label>NOTCH2NLC</label>
    </interactant>
    <organismsDiffer>false</organismsDiffer>
    <experiments>3</experiments>
</comment>
<comment type="interaction">
    <interactant intactId="EBI-10241252">
        <id>Q3SY46</id>
    </interactant>
    <interactant intactId="EBI-740446">
        <id>P32242</id>
        <label>OTX1</label>
    </interactant>
    <organismsDiffer>false</organismsDiffer>
    <experiments>3</experiments>
</comment>
<comment type="interaction">
    <interactant intactId="EBI-10241252">
        <id>Q3SY46</id>
    </interactant>
    <interactant intactId="EBI-12111000">
        <id>P55771</id>
        <label>PAX9</label>
    </interactant>
    <organismsDiffer>false</organismsDiffer>
    <experiments>3</experiments>
</comment>
<comment type="interaction">
    <interactant intactId="EBI-10241252">
        <id>Q3SY46</id>
    </interactant>
    <interactant intactId="EBI-11956269">
        <id>Q92824-2</id>
        <label>PCSK5</label>
    </interactant>
    <organismsDiffer>false</organismsDiffer>
    <experiments>3</experiments>
</comment>
<comment type="interaction">
    <interactant intactId="EBI-10241252">
        <id>Q3SY46</id>
    </interactant>
    <interactant intactId="EBI-17236143">
        <id>Q12837</id>
        <label>POU4F2</label>
    </interactant>
    <organismsDiffer>false</organismsDiffer>
    <experiments>3</experiments>
</comment>
<comment type="interaction">
    <interactant intactId="EBI-10241252">
        <id>Q3SY46</id>
    </interactant>
    <interactant intactId="EBI-21251460">
        <id>O60260-5</id>
        <label>PRKN</label>
    </interactant>
    <organismsDiffer>false</organismsDiffer>
    <experiments>3</experiments>
</comment>
<comment type="interaction">
    <interactant intactId="EBI-10241252">
        <id>Q3SY46</id>
    </interactant>
    <interactant intactId="EBI-948428">
        <id>Q9Y2K5</id>
        <label>R3HDM2</label>
    </interactant>
    <organismsDiffer>false</organismsDiffer>
    <experiments>3</experiments>
</comment>
<comment type="interaction">
    <interactant intactId="EBI-10241252">
        <id>Q3SY46</id>
    </interactant>
    <interactant intactId="EBI-740343">
        <id>Q93062-3</id>
        <label>RBPMS</label>
    </interactant>
    <organismsDiffer>false</organismsDiffer>
    <experiments>3</experiments>
</comment>
<comment type="interaction">
    <interactant intactId="EBI-10241252">
        <id>Q3SY46</id>
    </interactant>
    <interactant intactId="EBI-11984663">
        <id>Q06455-2</id>
        <label>RUNX1T1</label>
    </interactant>
    <organismsDiffer>false</organismsDiffer>
    <experiments>3</experiments>
</comment>
<comment type="interaction">
    <interactant intactId="EBI-10241252">
        <id>Q3SY46</id>
    </interactant>
    <interactant intactId="EBI-947791">
        <id>O75093</id>
        <label>SLIT1</label>
    </interactant>
    <organismsDiffer>false</organismsDiffer>
    <experiments>3</experiments>
</comment>
<comment type="interaction">
    <interactant intactId="EBI-10241252">
        <id>Q3SY46</id>
    </interactant>
    <interactant intactId="EBI-355653">
        <id>Q92922</id>
        <label>SMARCC1</label>
    </interactant>
    <organismsDiffer>false</organismsDiffer>
    <experiments>3</experiments>
</comment>
<comment type="interaction">
    <interactant intactId="EBI-10241252">
        <id>Q3SY46</id>
    </interactant>
    <interactant intactId="EBI-395421">
        <id>Q16637</id>
        <label>SMN2</label>
    </interactant>
    <organismsDiffer>false</organismsDiffer>
    <experiments>3</experiments>
</comment>
<comment type="interaction">
    <interactant intactId="EBI-10241252">
        <id>Q3SY46</id>
    </interactant>
    <interactant intactId="EBI-11959123">
        <id>Q99932-2</id>
        <label>SPAG8</label>
    </interactant>
    <organismsDiffer>false</organismsDiffer>
    <experiments>3</experiments>
</comment>
<comment type="interaction">
    <interactant intactId="EBI-10241252">
        <id>Q3SY46</id>
    </interactant>
    <interactant intactId="EBI-5235340">
        <id>Q7Z699</id>
        <label>SPRED1</label>
    </interactant>
    <organismsDiffer>false</organismsDiffer>
    <experiments>3</experiments>
</comment>
<comment type="interaction">
    <interactant intactId="EBI-10241252">
        <id>Q3SY46</id>
    </interactant>
    <interactant intactId="EBI-17721485">
        <id>Q8WWU5-7</id>
        <label>TCP11</label>
    </interactant>
    <organismsDiffer>false</organismsDiffer>
    <experiments>3</experiments>
</comment>
<comment type="interaction">
    <interactant intactId="EBI-10241252">
        <id>Q3SY46</id>
    </interactant>
    <interactant intactId="EBI-750487">
        <id>Q8WW24</id>
        <label>TEKT4</label>
    </interactant>
    <organismsDiffer>false</organismsDiffer>
    <experiments>5</experiments>
</comment>
<comment type="interaction">
    <interactant intactId="EBI-10241252">
        <id>Q3SY46</id>
    </interactant>
    <interactant intactId="EBI-11741437">
        <id>Q08117-2</id>
        <label>TLE5</label>
    </interactant>
    <organismsDiffer>false</organismsDiffer>
    <experiments>5</experiments>
</comment>
<comment type="interaction">
    <interactant intactId="EBI-10241252">
        <id>Q3SY46</id>
    </interactant>
    <interactant intactId="EBI-3939165">
        <id>O43711</id>
        <label>TLX3</label>
    </interactant>
    <organismsDiffer>false</organismsDiffer>
    <experiments>3</experiments>
</comment>
<comment type="interaction">
    <interactant intactId="EBI-10241252">
        <id>Q3SY46</id>
    </interactant>
    <interactant intactId="EBI-74615">
        <id>Q9H0E2</id>
        <label>TOLLIP</label>
    </interactant>
    <organismsDiffer>false</organismsDiffer>
    <experiments>5</experiments>
</comment>
<comment type="interaction">
    <interactant intactId="EBI-10241252">
        <id>Q3SY46</id>
    </interactant>
    <interactant intactId="EBI-10262539">
        <id>Q8IWR1</id>
        <label>TRIM59</label>
    </interactant>
    <organismsDiffer>false</organismsDiffer>
    <experiments>3</experiments>
</comment>
<comment type="interaction">
    <interactant intactId="EBI-10241252">
        <id>Q3SY46</id>
    </interactant>
    <interactant intactId="EBI-2130449">
        <id>Q6AZZ1</id>
        <label>TRIM68</label>
    </interactant>
    <organismsDiffer>false</organismsDiffer>
    <experiments>3</experiments>
</comment>
<comment type="interaction">
    <interactant intactId="EBI-10241252">
        <id>Q3SY46</id>
    </interactant>
    <interactant intactId="EBI-3918381">
        <id>Q96PN8</id>
        <label>TSSK3</label>
    </interactant>
    <organismsDiffer>false</organismsDiffer>
    <experiments>3</experiments>
</comment>
<comment type="interaction">
    <interactant intactId="EBI-10241252">
        <id>Q3SY46</id>
    </interactant>
    <interactant intactId="EBI-607755">
        <id>Q9BZL1</id>
        <label>UBL5</label>
    </interactant>
    <organismsDiffer>false</organismsDiffer>
    <experiments>3</experiments>
</comment>
<comment type="interaction">
    <interactant intactId="EBI-10241252">
        <id>Q3SY46</id>
    </interactant>
    <interactant intactId="EBI-11957238">
        <id>Q2TAL6</id>
        <label>VWC2</label>
    </interactant>
    <organismsDiffer>false</organismsDiffer>
    <experiments>3</experiments>
</comment>
<comment type="interaction">
    <interactant intactId="EBI-10241252">
        <id>Q3SY46</id>
    </interactant>
    <interactant intactId="EBI-720609">
        <id>O76024</id>
        <label>WFS1</label>
    </interactant>
    <organismsDiffer>false</organismsDiffer>
    <experiments>3</experiments>
</comment>
<comment type="interaction">
    <interactant intactId="EBI-10241252">
        <id>Q3SY46</id>
    </interactant>
    <interactant intactId="EBI-11993110">
        <id>Q9P2F9</id>
        <label>ZNF319</label>
    </interactant>
    <organismsDiffer>false</organismsDiffer>
    <experiments>3</experiments>
</comment>
<comment type="interaction">
    <interactant intactId="EBI-10241252">
        <id>Q3SY46</id>
    </interactant>
    <interactant intactId="EBI-373456">
        <id>Q9Y3S2</id>
        <label>ZNF330</label>
    </interactant>
    <organismsDiffer>false</organismsDiffer>
    <experiments>3</experiments>
</comment>
<comment type="interaction">
    <interactant intactId="EBI-10241252">
        <id>Q3SY46</id>
    </interactant>
    <interactant intactId="EBI-744257">
        <id>Q96IQ9</id>
        <label>ZNF414</label>
    </interactant>
    <organismsDiffer>false</organismsDiffer>
    <experiments>3</experiments>
</comment>
<comment type="similarity">
    <text evidence="2">Belongs to the PMG family.</text>
</comment>
<feature type="chain" id="PRO_0000185202" description="Keratin-associated protein 13-3">
    <location>
        <begin position="1"/>
        <end position="172"/>
    </location>
</feature>
<feature type="repeat" description="1">
    <location>
        <begin position="46"/>
        <end position="55"/>
    </location>
</feature>
<feature type="repeat" description="2">
    <location>
        <begin position="56"/>
        <end position="65"/>
    </location>
</feature>
<feature type="repeat" description="3">
    <location>
        <begin position="66"/>
        <end position="75"/>
    </location>
</feature>
<feature type="repeat" description="4">
    <location>
        <begin position="76"/>
        <end position="85"/>
    </location>
</feature>
<feature type="repeat" description="5">
    <location>
        <begin position="92"/>
        <end position="101"/>
    </location>
</feature>
<feature type="region of interest" description="5 X 10 AA approximate repeats">
    <location>
        <begin position="46"/>
        <end position="101"/>
    </location>
</feature>
<feature type="sequence conflict" description="In Ref. 1; BAE46355." evidence="2" ref="1">
    <original>C</original>
    <variation>R</variation>
    <location>
        <position position="13"/>
    </location>
</feature>
<feature type="sequence conflict" description="In Ref. 1; BAE46355." evidence="2" ref="1">
    <original>Y</original>
    <variation>H</variation>
    <location>
        <position position="18"/>
    </location>
</feature>
<feature type="sequence conflict" description="In Ref. 1; BAE46355." evidence="2" ref="1">
    <original>C</original>
    <variation>R</variation>
    <location>
        <position position="108"/>
    </location>
</feature>
<gene>
    <name type="primary">KRTAP13-3</name>
    <name type="synonym">KAP13.3</name>
</gene>
<evidence type="ECO:0000250" key="1"/>
<evidence type="ECO:0000305" key="2"/>
<dbReference type="EMBL" id="AB096940">
    <property type="protein sequence ID" value="BAE46355.1"/>
    <property type="molecule type" value="mRNA"/>
</dbReference>
<dbReference type="EMBL" id="BC103965">
    <property type="protein sequence ID" value="AAI03966.1"/>
    <property type="molecule type" value="mRNA"/>
</dbReference>
<dbReference type="CCDS" id="CCDS13591.1"/>
<dbReference type="RefSeq" id="NP_853653.1">
    <property type="nucleotide sequence ID" value="NM_181622.2"/>
</dbReference>
<dbReference type="BioGRID" id="130645">
    <property type="interactions" value="90"/>
</dbReference>
<dbReference type="FunCoup" id="Q3SY46">
    <property type="interactions" value="17"/>
</dbReference>
<dbReference type="IntAct" id="Q3SY46">
    <property type="interactions" value="89"/>
</dbReference>
<dbReference type="STRING" id="9606.ENSP00000375109"/>
<dbReference type="iPTMnet" id="Q3SY46"/>
<dbReference type="PhosphoSitePlus" id="Q3SY46"/>
<dbReference type="BioMuta" id="KRTAP13-3"/>
<dbReference type="DMDM" id="82592929"/>
<dbReference type="MassIVE" id="Q3SY46"/>
<dbReference type="PaxDb" id="9606-ENSP00000375109"/>
<dbReference type="PeptideAtlas" id="Q3SY46"/>
<dbReference type="Antibodypedia" id="64674">
    <property type="antibodies" value="79 antibodies from 15 providers"/>
</dbReference>
<dbReference type="DNASU" id="337960"/>
<dbReference type="Ensembl" id="ENST00000390690.3">
    <property type="protein sequence ID" value="ENSP00000375109.2"/>
    <property type="gene ID" value="ENSG00000240432.4"/>
</dbReference>
<dbReference type="GeneID" id="337960"/>
<dbReference type="KEGG" id="hsa:337960"/>
<dbReference type="MANE-Select" id="ENST00000390690.3">
    <property type="protein sequence ID" value="ENSP00000375109.2"/>
    <property type="RefSeq nucleotide sequence ID" value="NM_181622.2"/>
    <property type="RefSeq protein sequence ID" value="NP_853653.1"/>
</dbReference>
<dbReference type="UCSC" id="uc002yob.2">
    <property type="organism name" value="human"/>
</dbReference>
<dbReference type="AGR" id="HGNC:18925"/>
<dbReference type="CTD" id="337960"/>
<dbReference type="GeneCards" id="KRTAP13-3"/>
<dbReference type="HGNC" id="HGNC:18925">
    <property type="gene designation" value="KRTAP13-3"/>
</dbReference>
<dbReference type="HPA" id="ENSG00000240432">
    <property type="expression patterns" value="Not detected"/>
</dbReference>
<dbReference type="neXtProt" id="NX_Q3SY46"/>
<dbReference type="PharmGKB" id="PA134901486"/>
<dbReference type="VEuPathDB" id="HostDB:ENSG00000240432"/>
<dbReference type="eggNOG" id="ENOG502STG2">
    <property type="taxonomic scope" value="Eukaryota"/>
</dbReference>
<dbReference type="GeneTree" id="ENSGT00940000161951"/>
<dbReference type="HOGENOM" id="CLU_111618_0_0_1"/>
<dbReference type="InParanoid" id="Q3SY46"/>
<dbReference type="OMA" id="YRTCQSP"/>
<dbReference type="OrthoDB" id="9835168at2759"/>
<dbReference type="PAN-GO" id="Q3SY46">
    <property type="GO annotations" value="0 GO annotations based on evolutionary models"/>
</dbReference>
<dbReference type="PhylomeDB" id="Q3SY46"/>
<dbReference type="TreeFam" id="TF337331"/>
<dbReference type="PathwayCommons" id="Q3SY46"/>
<dbReference type="Reactome" id="R-HSA-6805567">
    <property type="pathway name" value="Keratinization"/>
</dbReference>
<dbReference type="SignaLink" id="Q3SY46"/>
<dbReference type="BioGRID-ORCS" id="337960">
    <property type="hits" value="7 hits in 1126 CRISPR screens"/>
</dbReference>
<dbReference type="GenomeRNAi" id="337960"/>
<dbReference type="Pharos" id="Q3SY46">
    <property type="development level" value="Tdark"/>
</dbReference>
<dbReference type="PRO" id="PR:Q3SY46"/>
<dbReference type="Proteomes" id="UP000005640">
    <property type="component" value="Chromosome 21"/>
</dbReference>
<dbReference type="RNAct" id="Q3SY46">
    <property type="molecule type" value="protein"/>
</dbReference>
<dbReference type="Bgee" id="ENSG00000240432">
    <property type="expression patterns" value="Expressed in primordial germ cell in gonad and 2 other cell types or tissues"/>
</dbReference>
<dbReference type="GO" id="GO:0005829">
    <property type="term" value="C:cytosol"/>
    <property type="evidence" value="ECO:0000304"/>
    <property type="project" value="Reactome"/>
</dbReference>
<dbReference type="GO" id="GO:0005882">
    <property type="term" value="C:intermediate filament"/>
    <property type="evidence" value="ECO:0007669"/>
    <property type="project" value="UniProtKB-KW"/>
</dbReference>
<dbReference type="InterPro" id="IPR007951">
    <property type="entry name" value="KRTAP_PMG"/>
</dbReference>
<dbReference type="Pfam" id="PF05287">
    <property type="entry name" value="PMG"/>
    <property type="match status" value="1"/>
</dbReference>
<proteinExistence type="evidence at protein level"/>
<keyword id="KW-0416">Keratin</keyword>
<keyword id="KW-1185">Reference proteome</keyword>
<keyword id="KW-0677">Repeat</keyword>
<accession>Q3SY46</accession>
<accession>Q3LI78</accession>
<protein>
    <recommendedName>
        <fullName>Keratin-associated protein 13-3</fullName>
    </recommendedName>
</protein>